<evidence type="ECO:0000255" key="1">
    <source>
        <dbReference type="HAMAP-Rule" id="MF_01874"/>
    </source>
</evidence>
<accession>B4T3W8</accession>
<proteinExistence type="inferred from homology"/>
<sequence length="148" mass="15344">MFDVTLLILLGLAALGFISHNTTVAVSILVLIIVRVTPLNTFFPWIEKQGLTVGIIILTIGVMAPIASGTLPPSTLIHSFVNWKSLVAIAVGVFVSWLGGRGITLMGNQPQLVAGLLVGTVLGVALFRGVPVGPLIAAGLVSLIVGKQ</sequence>
<organism>
    <name type="scientific">Salmonella newport (strain SL254)</name>
    <dbReference type="NCBI Taxonomy" id="423368"/>
    <lineage>
        <taxon>Bacteria</taxon>
        <taxon>Pseudomonadati</taxon>
        <taxon>Pseudomonadota</taxon>
        <taxon>Gammaproteobacteria</taxon>
        <taxon>Enterobacterales</taxon>
        <taxon>Enterobacteriaceae</taxon>
        <taxon>Salmonella</taxon>
    </lineage>
</organism>
<feature type="chain" id="PRO_0000388927" description="UPF0756 membrane protein YeaL">
    <location>
        <begin position="1"/>
        <end position="148"/>
    </location>
</feature>
<feature type="transmembrane region" description="Helical" evidence="1">
    <location>
        <begin position="14"/>
        <end position="34"/>
    </location>
</feature>
<feature type="transmembrane region" description="Helical" evidence="1">
    <location>
        <begin position="51"/>
        <end position="71"/>
    </location>
</feature>
<feature type="transmembrane region" description="Helical" evidence="1">
    <location>
        <begin position="86"/>
        <end position="106"/>
    </location>
</feature>
<feature type="transmembrane region" description="Helical" evidence="1">
    <location>
        <begin position="121"/>
        <end position="141"/>
    </location>
</feature>
<protein>
    <recommendedName>
        <fullName evidence="1">UPF0756 membrane protein YeaL</fullName>
    </recommendedName>
</protein>
<keyword id="KW-1003">Cell membrane</keyword>
<keyword id="KW-0472">Membrane</keyword>
<keyword id="KW-0812">Transmembrane</keyword>
<keyword id="KW-1133">Transmembrane helix</keyword>
<gene>
    <name evidence="1" type="primary">yeaL</name>
    <name type="ordered locus">SNSL254_A1390</name>
</gene>
<dbReference type="EMBL" id="CP001113">
    <property type="protein sequence ID" value="ACF63150.1"/>
    <property type="molecule type" value="Genomic_DNA"/>
</dbReference>
<dbReference type="RefSeq" id="WP_000460698.1">
    <property type="nucleotide sequence ID" value="NZ_CCMR01000003.1"/>
</dbReference>
<dbReference type="KEGG" id="see:SNSL254_A1390"/>
<dbReference type="HOGENOM" id="CLU_125889_0_0_6"/>
<dbReference type="Proteomes" id="UP000008824">
    <property type="component" value="Chromosome"/>
</dbReference>
<dbReference type="GO" id="GO:0005886">
    <property type="term" value="C:plasma membrane"/>
    <property type="evidence" value="ECO:0007669"/>
    <property type="project" value="UniProtKB-SubCell"/>
</dbReference>
<dbReference type="HAMAP" id="MF_01874">
    <property type="entry name" value="UPF0756"/>
    <property type="match status" value="1"/>
</dbReference>
<dbReference type="InterPro" id="IPR007382">
    <property type="entry name" value="UPF0756_TM"/>
</dbReference>
<dbReference type="PANTHER" id="PTHR38452">
    <property type="entry name" value="UPF0756 MEMBRANE PROTEIN YEAL"/>
    <property type="match status" value="1"/>
</dbReference>
<dbReference type="PANTHER" id="PTHR38452:SF1">
    <property type="entry name" value="UPF0756 MEMBRANE PROTEIN YEAL"/>
    <property type="match status" value="1"/>
</dbReference>
<dbReference type="Pfam" id="PF04284">
    <property type="entry name" value="DUF441"/>
    <property type="match status" value="1"/>
</dbReference>
<reference key="1">
    <citation type="journal article" date="2011" name="J. Bacteriol.">
        <title>Comparative genomics of 28 Salmonella enterica isolates: evidence for CRISPR-mediated adaptive sublineage evolution.</title>
        <authorList>
            <person name="Fricke W.F."/>
            <person name="Mammel M.K."/>
            <person name="McDermott P.F."/>
            <person name="Tartera C."/>
            <person name="White D.G."/>
            <person name="Leclerc J.E."/>
            <person name="Ravel J."/>
            <person name="Cebula T.A."/>
        </authorList>
    </citation>
    <scope>NUCLEOTIDE SEQUENCE [LARGE SCALE GENOMIC DNA]</scope>
    <source>
        <strain>SL254</strain>
    </source>
</reference>
<comment type="subcellular location">
    <subcellularLocation>
        <location evidence="1">Cell membrane</location>
        <topology evidence="1">Multi-pass membrane protein</topology>
    </subcellularLocation>
</comment>
<comment type="similarity">
    <text evidence="1">Belongs to the UPF0756 family.</text>
</comment>
<name>YEAL_SALNS</name>